<dbReference type="EC" id="3.1.1.5"/>
<dbReference type="EMBL" id="CH933811">
    <property type="protein sequence ID" value="EDW06294.1"/>
    <property type="molecule type" value="Genomic_DNA"/>
</dbReference>
<dbReference type="SMR" id="B4L535"/>
<dbReference type="FunCoup" id="B4L535">
    <property type="interactions" value="509"/>
</dbReference>
<dbReference type="GeneID" id="6584999"/>
<dbReference type="KEGG" id="dmo:Dmoj_GI21654"/>
<dbReference type="CTD" id="31716"/>
<dbReference type="eggNOG" id="KOG2968">
    <property type="taxonomic scope" value="Eukaryota"/>
</dbReference>
<dbReference type="HOGENOM" id="CLU_000960_1_0_1"/>
<dbReference type="InParanoid" id="B4L535"/>
<dbReference type="OMA" id="GQQEDRH"/>
<dbReference type="OrthoDB" id="421051at2759"/>
<dbReference type="PhylomeDB" id="B4L535"/>
<dbReference type="Proteomes" id="UP000009192">
    <property type="component" value="Unassembled WGS sequence"/>
</dbReference>
<dbReference type="GO" id="GO:0005789">
    <property type="term" value="C:endoplasmic reticulum membrane"/>
    <property type="evidence" value="ECO:0000250"/>
    <property type="project" value="UniProtKB"/>
</dbReference>
<dbReference type="GO" id="GO:0005886">
    <property type="term" value="C:plasma membrane"/>
    <property type="evidence" value="ECO:0007669"/>
    <property type="project" value="EnsemblMetazoa"/>
</dbReference>
<dbReference type="GO" id="GO:0004622">
    <property type="term" value="F:lysophospholipase activity"/>
    <property type="evidence" value="ECO:0000250"/>
    <property type="project" value="UniProtKB"/>
</dbReference>
<dbReference type="GO" id="GO:0034236">
    <property type="term" value="F:protein kinase A catalytic subunit binding"/>
    <property type="evidence" value="ECO:0007669"/>
    <property type="project" value="EnsemblMetazoa"/>
</dbReference>
<dbReference type="GO" id="GO:0007272">
    <property type="term" value="P:ensheathment of neurons"/>
    <property type="evidence" value="ECO:0007669"/>
    <property type="project" value="EnsemblMetazoa"/>
</dbReference>
<dbReference type="GO" id="GO:0034349">
    <property type="term" value="P:glial cell apoptotic process"/>
    <property type="evidence" value="ECO:0000250"/>
    <property type="project" value="UniProtKB"/>
</dbReference>
<dbReference type="GO" id="GO:0016042">
    <property type="term" value="P:lipid catabolic process"/>
    <property type="evidence" value="ECO:0007669"/>
    <property type="project" value="UniProtKB-KW"/>
</dbReference>
<dbReference type="GO" id="GO:0006643">
    <property type="term" value="P:membrane lipid metabolic process"/>
    <property type="evidence" value="ECO:0000250"/>
    <property type="project" value="UniProtKB"/>
</dbReference>
<dbReference type="GO" id="GO:0061024">
    <property type="term" value="P:membrane organization"/>
    <property type="evidence" value="ECO:0000250"/>
    <property type="project" value="UniProtKB"/>
</dbReference>
<dbReference type="GO" id="GO:0051402">
    <property type="term" value="P:neuron apoptotic process"/>
    <property type="evidence" value="ECO:0000250"/>
    <property type="project" value="UniProtKB"/>
</dbReference>
<dbReference type="GO" id="GO:0046470">
    <property type="term" value="P:phosphatidylcholine metabolic process"/>
    <property type="evidence" value="ECO:0000250"/>
    <property type="project" value="UniProtKB"/>
</dbReference>
<dbReference type="GO" id="GO:0045494">
    <property type="term" value="P:photoreceptor cell maintenance"/>
    <property type="evidence" value="ECO:0007669"/>
    <property type="project" value="EnsemblMetazoa"/>
</dbReference>
<dbReference type="GO" id="GO:0072657">
    <property type="term" value="P:protein localization to membrane"/>
    <property type="evidence" value="ECO:0007669"/>
    <property type="project" value="EnsemblMetazoa"/>
</dbReference>
<dbReference type="GO" id="GO:0007608">
    <property type="term" value="P:sensory perception of smell"/>
    <property type="evidence" value="ECO:0007669"/>
    <property type="project" value="EnsemblMetazoa"/>
</dbReference>
<dbReference type="CDD" id="cd00038">
    <property type="entry name" value="CAP_ED"/>
    <property type="match status" value="3"/>
</dbReference>
<dbReference type="CDD" id="cd07225">
    <property type="entry name" value="Pat_PNPLA6_PNPLA7"/>
    <property type="match status" value="1"/>
</dbReference>
<dbReference type="FunFam" id="2.60.120.10:FF:000010">
    <property type="entry name" value="neuropathy target esterase isoform X1"/>
    <property type="match status" value="1"/>
</dbReference>
<dbReference type="FunFam" id="2.60.120.10:FF:000122">
    <property type="entry name" value="Neuropathy target esterase sws"/>
    <property type="match status" value="1"/>
</dbReference>
<dbReference type="FunFam" id="2.60.120.10:FF:000135">
    <property type="entry name" value="Neuropathy target esterase sws"/>
    <property type="match status" value="1"/>
</dbReference>
<dbReference type="FunFam" id="3.40.1090.10:FF:000022">
    <property type="entry name" value="Neuropathy target esterase sws"/>
    <property type="match status" value="1"/>
</dbReference>
<dbReference type="FunFam" id="3.40.1090.10:FF:000033">
    <property type="entry name" value="Neuropathy target esterase sws"/>
    <property type="match status" value="1"/>
</dbReference>
<dbReference type="Gene3D" id="3.40.1090.10">
    <property type="entry name" value="Cytosolic phospholipase A2 catalytic domain"/>
    <property type="match status" value="2"/>
</dbReference>
<dbReference type="Gene3D" id="2.60.120.10">
    <property type="entry name" value="Jelly Rolls"/>
    <property type="match status" value="3"/>
</dbReference>
<dbReference type="InterPro" id="IPR016035">
    <property type="entry name" value="Acyl_Trfase/lysoPLipase"/>
</dbReference>
<dbReference type="InterPro" id="IPR000595">
    <property type="entry name" value="cNMP-bd_dom"/>
</dbReference>
<dbReference type="InterPro" id="IPR018490">
    <property type="entry name" value="cNMP-bd_dom_sf"/>
</dbReference>
<dbReference type="InterPro" id="IPR001423">
    <property type="entry name" value="LysoPLipase_patatin_CS"/>
</dbReference>
<dbReference type="InterPro" id="IPR050301">
    <property type="entry name" value="NTE"/>
</dbReference>
<dbReference type="InterPro" id="IPR056556">
    <property type="entry name" value="NTE1_P-loop_dom"/>
</dbReference>
<dbReference type="InterPro" id="IPR002641">
    <property type="entry name" value="PNPLA_dom"/>
</dbReference>
<dbReference type="InterPro" id="IPR014710">
    <property type="entry name" value="RmlC-like_jellyroll"/>
</dbReference>
<dbReference type="PANTHER" id="PTHR14226:SF29">
    <property type="entry name" value="NEUROPATHY TARGET ESTERASE SWS"/>
    <property type="match status" value="1"/>
</dbReference>
<dbReference type="PANTHER" id="PTHR14226">
    <property type="entry name" value="NEUROPATHY TARGET ESTERASE/SWISS CHEESE D.MELANOGASTER"/>
    <property type="match status" value="1"/>
</dbReference>
<dbReference type="Pfam" id="PF00027">
    <property type="entry name" value="cNMP_binding"/>
    <property type="match status" value="3"/>
</dbReference>
<dbReference type="Pfam" id="PF24179">
    <property type="entry name" value="NTE_Ploop"/>
    <property type="match status" value="1"/>
</dbReference>
<dbReference type="Pfam" id="PF01734">
    <property type="entry name" value="Patatin"/>
    <property type="match status" value="1"/>
</dbReference>
<dbReference type="SMART" id="SM00100">
    <property type="entry name" value="cNMP"/>
    <property type="match status" value="3"/>
</dbReference>
<dbReference type="SUPFAM" id="SSF51206">
    <property type="entry name" value="cAMP-binding domain-like"/>
    <property type="match status" value="3"/>
</dbReference>
<dbReference type="SUPFAM" id="SSF52151">
    <property type="entry name" value="FabD/lysophospholipase-like"/>
    <property type="match status" value="2"/>
</dbReference>
<dbReference type="PROSITE" id="PS50042">
    <property type="entry name" value="CNMP_BINDING_3"/>
    <property type="match status" value="3"/>
</dbReference>
<dbReference type="PROSITE" id="PS51635">
    <property type="entry name" value="PNPLA"/>
    <property type="match status" value="1"/>
</dbReference>
<dbReference type="PROSITE" id="PS01237">
    <property type="entry name" value="UPF0028"/>
    <property type="match status" value="1"/>
</dbReference>
<sequence>MDVLELLRASVNGCYNTLFSDAWSQYVSKQIATTTYWYGALLAIGALFIAWFLYFKRLASLRLRDESARTLSALTAASGGDHRGLRFRKRDKMLFYGRRMLRKMKNVSGQMYSSGKGYKRRAVMRFARRILQLQRENRPLEMKTVEPPAEYLEETIDGSDRVPPDALYMLQSIRIFGHFEKPIFLKLCKHTQLLQLMAGDYLFKITDPDDSVYIVQSGMINVYICNADGSTLSLKTVRKGESVTSLLSFIDVLSGNSSYYKTVTAKAMEKSVVIRLPMQAFEEVFNENPDVMIRVIQVIMIRLQRVLFTALRNYLGLNAELVQNHMRIKGSNPVPVTVPGPVLSQASQASRAMASRPATSPVTRMSREEHTLSDPDPNPNASAMLFAEVHGDAPYIDLYHHQQQQSSGVSVGGTHRSSGACTPTGSGGESPDGTGNATITNIDQRLVQSSAVDSLRRELGLSEEDTSIIEPFVEVRELEPNVTLITEGNAEDVCIWFVMTGTLAVYQSNADATRAAKQDSKNDMLIHFVHPGEIVGGLAMLTGEASAYTIRARSNSRIAYIRRAAIYQIMRQRPRIVLDLGNGVVRRLSPLVRQCDYALDWIFLESGRAVYRQDESSDSTYIVLSGRMRSVITHPGGKKEIVGEYGKGDLVGIVEMITETSRTTTVLAVRDSELAKLPEGLFNAIKLRYPIVVTRLISFLSHRFLGSMQTRGANASSAPVEANPVTHKYSTVALVPITDDVPITPFTYELYHSLCAIGPVLRLTSEVVRKQLGNNIFEAANEYRLTSWLAQQEDRNIITLYQCDSALSPWTQRCMRQADVVLIVGLGERSHMVGKFEREIDKLAMRTQKELVLLYPETTNARPANTLSWLNARPWVTKHHHVLCVKRIFTRKSQYRINDLYSRVLLSEPNMHSDFSRLARWLTGNSIGLVLGGGGARGAAHIGMLKAIQEAGIPIDMVGGVSIGALMGALWCSERNITTVTQKAREWSKKMTKWFLQLLDLTYPITSMFSGREFNKTIHDTFGDVSIEDLWIPYFTLTTDITASCHRIHTNGSLWRYVRSSMSLSGYMPPLCDPQDGHLLLDGGYVNNLPGHLWRYCRASMSIAGVFPPFCDYRDGHLLLDGCYTNNVPADVMHNLGAAHIIAIDVGSQDDTDLTNYGDDLSGWWLLYKKWNPFTSPVKVPDLPDIQSRLAYVSCVRQLEEVKNSDYCEYIRPPIDKYKTLAFGSFDEIRDVGYVFGKNYFDNMAKAGRLGRFNQWFNKEPPKRGNHASLNEYTFIDLAQIVCKLPETYALNAVDIFSEDEDFDGYISEPTTLNMDRHRIQVPRAGNSLSFSETELDSDVEIDLELERKVDKSTQSTPPTPNKKHPSTPTSSQGNLMHLPLSMKAKDKMQILDKLEREHKRRQKSKHKRDRSMQRDSKATLHPAPMAEATTQTPSSDVDIDAKLDQLRKLQQELEQGNESEQEQEQEQEQEQGHIQEPENVTEADTKN</sequence>
<reference evidence="6" key="1">
    <citation type="journal article" date="2007" name="Nature">
        <title>Evolution of genes and genomes on the Drosophila phylogeny.</title>
        <authorList>
            <consortium name="Drosophila 12 genomes consortium"/>
        </authorList>
    </citation>
    <scope>NUCLEOTIDE SEQUENCE [LARGE SCALE GENOMIC DNA]</scope>
    <source>
        <strain evidence="6">Tucson 15081-1352.22</strain>
    </source>
</reference>
<accession>B4L535</accession>
<keyword id="KW-0217">Developmental protein</keyword>
<keyword id="KW-0256">Endoplasmic reticulum</keyword>
<keyword id="KW-0378">Hydrolase</keyword>
<keyword id="KW-0442">Lipid degradation</keyword>
<keyword id="KW-0443">Lipid metabolism</keyword>
<keyword id="KW-0472">Membrane</keyword>
<keyword id="KW-0524">Neurogenesis</keyword>
<keyword id="KW-0597">Phosphoprotein</keyword>
<keyword id="KW-1185">Reference proteome</keyword>
<keyword id="KW-0812">Transmembrane</keyword>
<keyword id="KW-1133">Transmembrane helix</keyword>
<proteinExistence type="inferred from homology"/>
<organism>
    <name type="scientific">Drosophila mojavensis</name>
    <name type="common">Fruit fly</name>
    <dbReference type="NCBI Taxonomy" id="7230"/>
    <lineage>
        <taxon>Eukaryota</taxon>
        <taxon>Metazoa</taxon>
        <taxon>Ecdysozoa</taxon>
        <taxon>Arthropoda</taxon>
        <taxon>Hexapoda</taxon>
        <taxon>Insecta</taxon>
        <taxon>Pterygota</taxon>
        <taxon>Neoptera</taxon>
        <taxon>Endopterygota</taxon>
        <taxon>Diptera</taxon>
        <taxon>Brachycera</taxon>
        <taxon>Muscomorpha</taxon>
        <taxon>Ephydroidea</taxon>
        <taxon>Drosophilidae</taxon>
        <taxon>Drosophila</taxon>
    </lineage>
</organism>
<comment type="function">
    <text evidence="2">Phospholipase B that deacylates intracellular phosphatidylcholine (PtdCho), generating glycerophosphocholine (GroPtdCho). This deacylation occurs at both sn-2 and sn-1 positions of PtdCho. Its specific chemical modification by certain organophosphorus (OP) compounds leads to distal axonopathy. Plays a role in the signaling mechanism between neurons and glia that regulates glia wrapping during development of the adult brain. Essential for membrane lipid homeostasis and cell survival in both neurons and glia of the adult brain (By similarity).</text>
</comment>
<comment type="catalytic activity">
    <reaction evidence="2">
        <text>a 1-acyl-sn-glycero-3-phosphocholine + H2O = sn-glycerol 3-phosphocholine + a fatty acid + H(+)</text>
        <dbReference type="Rhea" id="RHEA:15177"/>
        <dbReference type="ChEBI" id="CHEBI:15377"/>
        <dbReference type="ChEBI" id="CHEBI:15378"/>
        <dbReference type="ChEBI" id="CHEBI:16870"/>
        <dbReference type="ChEBI" id="CHEBI:28868"/>
        <dbReference type="ChEBI" id="CHEBI:58168"/>
        <dbReference type="EC" id="3.1.1.5"/>
    </reaction>
</comment>
<comment type="subunit">
    <text evidence="1">Interacts with Pka-C3; interaction inhibits the catalytic function of Pka-C3 and the esterase activity of sws.</text>
</comment>
<comment type="subcellular location">
    <subcellularLocation>
        <location evidence="2">Endoplasmic reticulum membrane</location>
        <topology evidence="2">Single-pass type I membrane protein</topology>
    </subcellularLocation>
    <text evidence="2">Sws tethers Pka-C3 to the membrane.</text>
</comment>
<comment type="similarity">
    <text evidence="3">Belongs to the NTE family.</text>
</comment>
<name>SWS_DROMO</name>
<evidence type="ECO:0000250" key="1"/>
<evidence type="ECO:0000250" key="2">
    <source>
        <dbReference type="UniProtKB" id="Q9U969"/>
    </source>
</evidence>
<evidence type="ECO:0000255" key="3"/>
<evidence type="ECO:0000255" key="4">
    <source>
        <dbReference type="PROSITE-ProRule" id="PRU01161"/>
    </source>
</evidence>
<evidence type="ECO:0000256" key="5">
    <source>
        <dbReference type="SAM" id="MobiDB-lite"/>
    </source>
</evidence>
<evidence type="ECO:0000312" key="6">
    <source>
        <dbReference type="EMBL" id="EDW06294.1"/>
    </source>
</evidence>
<protein>
    <recommendedName>
        <fullName evidence="2">Neuropathy target esterase sws</fullName>
    </recommendedName>
    <alternativeName>
        <fullName evidence="2">Swiss cheese</fullName>
        <ecNumber>3.1.1.5</ecNumber>
    </alternativeName>
</protein>
<feature type="chain" id="PRO_0000389223" description="Neuropathy target esterase sws">
    <location>
        <begin position="1"/>
        <end position="1488"/>
    </location>
</feature>
<feature type="topological domain" description="Lumenal" evidence="3">
    <location>
        <begin position="1"/>
        <end position="34"/>
    </location>
</feature>
<feature type="transmembrane region" description="Helical" evidence="3">
    <location>
        <begin position="35"/>
        <end position="55"/>
    </location>
</feature>
<feature type="topological domain" description="Cytoplasmic" evidence="3">
    <location>
        <begin position="56"/>
        <end position="1488"/>
    </location>
</feature>
<feature type="domain" description="PNPLA" evidence="4">
    <location>
        <begin position="929"/>
        <end position="1095"/>
    </location>
</feature>
<feature type="region of interest" description="Disordered" evidence="5">
    <location>
        <begin position="339"/>
        <end position="379"/>
    </location>
</feature>
<feature type="region of interest" description="Disordered" evidence="5">
    <location>
        <begin position="402"/>
        <end position="440"/>
    </location>
</feature>
<feature type="region of interest" description="Disordered" evidence="5">
    <location>
        <begin position="1348"/>
        <end position="1376"/>
    </location>
</feature>
<feature type="region of interest" description="Disordered" evidence="5">
    <location>
        <begin position="1398"/>
        <end position="1488"/>
    </location>
</feature>
<feature type="short sequence motif" description="GXGXXG" evidence="4">
    <location>
        <begin position="933"/>
        <end position="938"/>
    </location>
</feature>
<feature type="short sequence motif" description="GXSXG" evidence="4">
    <location>
        <begin position="960"/>
        <end position="964"/>
    </location>
</feature>
<feature type="short sequence motif" description="DGA/G" evidence="4">
    <location>
        <begin position="1082"/>
        <end position="1084"/>
    </location>
</feature>
<feature type="compositionally biased region" description="Low complexity" evidence="5">
    <location>
        <begin position="344"/>
        <end position="356"/>
    </location>
</feature>
<feature type="compositionally biased region" description="Low complexity" evidence="5">
    <location>
        <begin position="402"/>
        <end position="413"/>
    </location>
</feature>
<feature type="compositionally biased region" description="Polar residues" evidence="5">
    <location>
        <begin position="415"/>
        <end position="424"/>
    </location>
</feature>
<feature type="compositionally biased region" description="Basic residues" evidence="5">
    <location>
        <begin position="1399"/>
        <end position="1410"/>
    </location>
</feature>
<feature type="compositionally biased region" description="Basic and acidic residues" evidence="5">
    <location>
        <begin position="1440"/>
        <end position="1452"/>
    </location>
</feature>
<feature type="compositionally biased region" description="Acidic residues" evidence="5">
    <location>
        <begin position="1456"/>
        <end position="1470"/>
    </location>
</feature>
<feature type="active site" description="Nucleophile" evidence="4">
    <location>
        <position position="962"/>
    </location>
</feature>
<feature type="active site" description="Proton acceptor" evidence="4">
    <location>
        <position position="1082"/>
    </location>
</feature>
<feature type="binding site" evidence="3">
    <location>
        <begin position="175"/>
        <end position="302"/>
    </location>
    <ligand>
        <name>a nucleoside 3',5'-cyclic phosphate</name>
        <dbReference type="ChEBI" id="CHEBI:58464"/>
        <label>1</label>
    </ligand>
</feature>
<feature type="binding site" evidence="3">
    <location>
        <begin position="458"/>
        <end position="587"/>
    </location>
    <ligand>
        <name>a nucleoside 3',5'-cyclic phosphate</name>
        <dbReference type="ChEBI" id="CHEBI:58464"/>
        <label>2</label>
    </ligand>
</feature>
<feature type="binding site" evidence="3">
    <location>
        <begin position="576"/>
        <end position="703"/>
    </location>
    <ligand>
        <name>a nucleoside 3',5'-cyclic phosphate</name>
        <dbReference type="ChEBI" id="CHEBI:58464"/>
        <label>3</label>
    </ligand>
</feature>
<feature type="modified residue" description="Phosphoserine" evidence="2">
    <location>
        <position position="1176"/>
    </location>
</feature>
<gene>
    <name evidence="2" type="primary">sws</name>
    <name type="ORF">GI21654</name>
</gene>